<gene>
    <name evidence="1" type="primary">purA</name>
    <name type="ordered locus">Ecok1_42280</name>
    <name type="ORF">APECO1_2215</name>
</gene>
<proteinExistence type="inferred from homology"/>
<feature type="chain" id="PRO_1000000813" description="Adenylosuccinate synthetase">
    <location>
        <begin position="1"/>
        <end position="432"/>
    </location>
</feature>
<feature type="active site" description="Proton acceptor" evidence="1">
    <location>
        <position position="14"/>
    </location>
</feature>
<feature type="active site" description="Proton donor" evidence="1">
    <location>
        <position position="42"/>
    </location>
</feature>
<feature type="binding site" evidence="1">
    <location>
        <begin position="13"/>
        <end position="19"/>
    </location>
    <ligand>
        <name>GTP</name>
        <dbReference type="ChEBI" id="CHEBI:37565"/>
    </ligand>
</feature>
<feature type="binding site" description="in other chain" evidence="1">
    <location>
        <begin position="14"/>
        <end position="17"/>
    </location>
    <ligand>
        <name>IMP</name>
        <dbReference type="ChEBI" id="CHEBI:58053"/>
        <note>ligand shared between dimeric partners</note>
    </ligand>
</feature>
<feature type="binding site" evidence="1">
    <location>
        <position position="14"/>
    </location>
    <ligand>
        <name>Mg(2+)</name>
        <dbReference type="ChEBI" id="CHEBI:18420"/>
    </ligand>
</feature>
<feature type="binding site" description="in other chain" evidence="1">
    <location>
        <begin position="39"/>
        <end position="42"/>
    </location>
    <ligand>
        <name>IMP</name>
        <dbReference type="ChEBI" id="CHEBI:58053"/>
        <note>ligand shared between dimeric partners</note>
    </ligand>
</feature>
<feature type="binding site" evidence="1">
    <location>
        <begin position="41"/>
        <end position="43"/>
    </location>
    <ligand>
        <name>GTP</name>
        <dbReference type="ChEBI" id="CHEBI:37565"/>
    </ligand>
</feature>
<feature type="binding site" evidence="1">
    <location>
        <position position="41"/>
    </location>
    <ligand>
        <name>Mg(2+)</name>
        <dbReference type="ChEBI" id="CHEBI:18420"/>
    </ligand>
</feature>
<feature type="binding site" description="in other chain" evidence="1">
    <location>
        <position position="130"/>
    </location>
    <ligand>
        <name>IMP</name>
        <dbReference type="ChEBI" id="CHEBI:58053"/>
        <note>ligand shared between dimeric partners</note>
    </ligand>
</feature>
<feature type="binding site" evidence="1">
    <location>
        <position position="144"/>
    </location>
    <ligand>
        <name>IMP</name>
        <dbReference type="ChEBI" id="CHEBI:58053"/>
        <note>ligand shared between dimeric partners</note>
    </ligand>
</feature>
<feature type="binding site" description="in other chain" evidence="1">
    <location>
        <position position="225"/>
    </location>
    <ligand>
        <name>IMP</name>
        <dbReference type="ChEBI" id="CHEBI:58053"/>
        <note>ligand shared between dimeric partners</note>
    </ligand>
</feature>
<feature type="binding site" description="in other chain" evidence="1">
    <location>
        <position position="240"/>
    </location>
    <ligand>
        <name>IMP</name>
        <dbReference type="ChEBI" id="CHEBI:58053"/>
        <note>ligand shared between dimeric partners</note>
    </ligand>
</feature>
<feature type="binding site" evidence="1">
    <location>
        <begin position="300"/>
        <end position="306"/>
    </location>
    <ligand>
        <name>substrate</name>
    </ligand>
</feature>
<feature type="binding site" description="in other chain" evidence="1">
    <location>
        <position position="304"/>
    </location>
    <ligand>
        <name>IMP</name>
        <dbReference type="ChEBI" id="CHEBI:58053"/>
        <note>ligand shared between dimeric partners</note>
    </ligand>
</feature>
<feature type="binding site" evidence="1">
    <location>
        <position position="306"/>
    </location>
    <ligand>
        <name>GTP</name>
        <dbReference type="ChEBI" id="CHEBI:37565"/>
    </ligand>
</feature>
<feature type="binding site" evidence="1">
    <location>
        <begin position="332"/>
        <end position="334"/>
    </location>
    <ligand>
        <name>GTP</name>
        <dbReference type="ChEBI" id="CHEBI:37565"/>
    </ligand>
</feature>
<feature type="binding site" evidence="1">
    <location>
        <begin position="415"/>
        <end position="417"/>
    </location>
    <ligand>
        <name>GTP</name>
        <dbReference type="ChEBI" id="CHEBI:37565"/>
    </ligand>
</feature>
<protein>
    <recommendedName>
        <fullName evidence="1">Adenylosuccinate synthetase</fullName>
        <shortName evidence="1">AMPSase</shortName>
        <shortName evidence="1">AdSS</shortName>
        <ecNumber evidence="1">6.3.4.4</ecNumber>
    </recommendedName>
    <alternativeName>
        <fullName evidence="1">IMP--aspartate ligase</fullName>
    </alternativeName>
</protein>
<evidence type="ECO:0000255" key="1">
    <source>
        <dbReference type="HAMAP-Rule" id="MF_00011"/>
    </source>
</evidence>
<accession>A1AJ82</accession>
<sequence length="432" mass="47345">MGNNVVVLGTQWGDEGKGKIVDLLTERAKYVVRYQGGHNAGHTLVINGEKTVLHLIPSGILRENVTSIIGNGVVLSPAALMKEMKELEDRGIPVRERLLLSEACPLILDYHVALDNAREKARGAKAIGTTGRGIGPAYEDKVARRGLRVGDLFDKETFAEKLKEVMEYHNFQLVNYYKAEAVDYQKVLDDTMAVADILTSMVVDVSDLLDQARQRGDFVMFEGAQGTLLDIDHGTYPYVTSSNTTAGGVATGSGLGPRYVDYVLGILKAYSTRVGAGPFPTELFDETGEFLCKQGNEFGATTGRRRRTGWLDTVAVRRAVQLNSLSGFCLTKLDVLDGLKEVKLCVAYRMPDGREVTTTPLAADDWKGVEPIYETMPGWSESTFGVKDRSGLPQAALNYIKRIEELTGVPIDIISTGPDRTETMILRDPFDA</sequence>
<organism>
    <name type="scientific">Escherichia coli O1:K1 / APEC</name>
    <dbReference type="NCBI Taxonomy" id="405955"/>
    <lineage>
        <taxon>Bacteria</taxon>
        <taxon>Pseudomonadati</taxon>
        <taxon>Pseudomonadota</taxon>
        <taxon>Gammaproteobacteria</taxon>
        <taxon>Enterobacterales</taxon>
        <taxon>Enterobacteriaceae</taxon>
        <taxon>Escherichia</taxon>
    </lineage>
</organism>
<comment type="function">
    <text evidence="1">Plays an important role in the de novo pathway of purine nucleotide biosynthesis. Catalyzes the first committed step in the biosynthesis of AMP from IMP.</text>
</comment>
<comment type="catalytic activity">
    <reaction evidence="1">
        <text>IMP + L-aspartate + GTP = N(6)-(1,2-dicarboxyethyl)-AMP + GDP + phosphate + 2 H(+)</text>
        <dbReference type="Rhea" id="RHEA:15753"/>
        <dbReference type="ChEBI" id="CHEBI:15378"/>
        <dbReference type="ChEBI" id="CHEBI:29991"/>
        <dbReference type="ChEBI" id="CHEBI:37565"/>
        <dbReference type="ChEBI" id="CHEBI:43474"/>
        <dbReference type="ChEBI" id="CHEBI:57567"/>
        <dbReference type="ChEBI" id="CHEBI:58053"/>
        <dbReference type="ChEBI" id="CHEBI:58189"/>
        <dbReference type="EC" id="6.3.4.4"/>
    </reaction>
</comment>
<comment type="cofactor">
    <cofactor evidence="1">
        <name>Mg(2+)</name>
        <dbReference type="ChEBI" id="CHEBI:18420"/>
    </cofactor>
    <text evidence="1">Binds 1 Mg(2+) ion per subunit.</text>
</comment>
<comment type="pathway">
    <text evidence="1">Purine metabolism; AMP biosynthesis via de novo pathway; AMP from IMP: step 1/2.</text>
</comment>
<comment type="subunit">
    <text evidence="1">Homodimer.</text>
</comment>
<comment type="subcellular location">
    <subcellularLocation>
        <location evidence="1">Cytoplasm</location>
    </subcellularLocation>
</comment>
<comment type="similarity">
    <text evidence="1">Belongs to the adenylosuccinate synthetase family.</text>
</comment>
<name>PURA_ECOK1</name>
<dbReference type="EC" id="6.3.4.4" evidence="1"/>
<dbReference type="EMBL" id="CP000468">
    <property type="protein sequence ID" value="ABJ03722.1"/>
    <property type="molecule type" value="Genomic_DNA"/>
</dbReference>
<dbReference type="RefSeq" id="WP_000527955.1">
    <property type="nucleotide sequence ID" value="NZ_CADILS010000035.1"/>
</dbReference>
<dbReference type="SMR" id="A1AJ82"/>
<dbReference type="GeneID" id="75202411"/>
<dbReference type="KEGG" id="ecv:APECO1_2215"/>
<dbReference type="HOGENOM" id="CLU_029848_0_0_6"/>
<dbReference type="UniPathway" id="UPA00075">
    <property type="reaction ID" value="UER00335"/>
</dbReference>
<dbReference type="Proteomes" id="UP000008216">
    <property type="component" value="Chromosome"/>
</dbReference>
<dbReference type="GO" id="GO:0005737">
    <property type="term" value="C:cytoplasm"/>
    <property type="evidence" value="ECO:0007669"/>
    <property type="project" value="UniProtKB-SubCell"/>
</dbReference>
<dbReference type="GO" id="GO:0004019">
    <property type="term" value="F:adenylosuccinate synthase activity"/>
    <property type="evidence" value="ECO:0007669"/>
    <property type="project" value="UniProtKB-UniRule"/>
</dbReference>
<dbReference type="GO" id="GO:0005525">
    <property type="term" value="F:GTP binding"/>
    <property type="evidence" value="ECO:0007669"/>
    <property type="project" value="UniProtKB-UniRule"/>
</dbReference>
<dbReference type="GO" id="GO:0000287">
    <property type="term" value="F:magnesium ion binding"/>
    <property type="evidence" value="ECO:0007669"/>
    <property type="project" value="UniProtKB-UniRule"/>
</dbReference>
<dbReference type="GO" id="GO:0044208">
    <property type="term" value="P:'de novo' AMP biosynthetic process"/>
    <property type="evidence" value="ECO:0007669"/>
    <property type="project" value="UniProtKB-UniRule"/>
</dbReference>
<dbReference type="GO" id="GO:0046040">
    <property type="term" value="P:IMP metabolic process"/>
    <property type="evidence" value="ECO:0007669"/>
    <property type="project" value="TreeGrafter"/>
</dbReference>
<dbReference type="CDD" id="cd03108">
    <property type="entry name" value="AdSS"/>
    <property type="match status" value="1"/>
</dbReference>
<dbReference type="FunFam" id="1.10.300.10:FF:000001">
    <property type="entry name" value="Adenylosuccinate synthetase"/>
    <property type="match status" value="1"/>
</dbReference>
<dbReference type="FunFam" id="3.90.170.10:FF:000001">
    <property type="entry name" value="Adenylosuccinate synthetase"/>
    <property type="match status" value="1"/>
</dbReference>
<dbReference type="Gene3D" id="3.40.440.10">
    <property type="entry name" value="Adenylosuccinate Synthetase, subunit A, domain 1"/>
    <property type="match status" value="1"/>
</dbReference>
<dbReference type="Gene3D" id="1.10.300.10">
    <property type="entry name" value="Adenylosuccinate Synthetase, subunit A, domain 2"/>
    <property type="match status" value="1"/>
</dbReference>
<dbReference type="Gene3D" id="3.90.170.10">
    <property type="entry name" value="Adenylosuccinate Synthetase, subunit A, domain 3"/>
    <property type="match status" value="1"/>
</dbReference>
<dbReference type="HAMAP" id="MF_00011">
    <property type="entry name" value="Adenylosucc_synth"/>
    <property type="match status" value="1"/>
</dbReference>
<dbReference type="InterPro" id="IPR018220">
    <property type="entry name" value="Adenylosuccin_syn_GTP-bd"/>
</dbReference>
<dbReference type="InterPro" id="IPR033128">
    <property type="entry name" value="Adenylosuccin_syn_Lys_AS"/>
</dbReference>
<dbReference type="InterPro" id="IPR042109">
    <property type="entry name" value="Adenylosuccinate_synth_dom1"/>
</dbReference>
<dbReference type="InterPro" id="IPR042110">
    <property type="entry name" value="Adenylosuccinate_synth_dom2"/>
</dbReference>
<dbReference type="InterPro" id="IPR042111">
    <property type="entry name" value="Adenylosuccinate_synth_dom3"/>
</dbReference>
<dbReference type="InterPro" id="IPR001114">
    <property type="entry name" value="Adenylosuccinate_synthetase"/>
</dbReference>
<dbReference type="InterPro" id="IPR027417">
    <property type="entry name" value="P-loop_NTPase"/>
</dbReference>
<dbReference type="NCBIfam" id="NF002223">
    <property type="entry name" value="PRK01117.1"/>
    <property type="match status" value="1"/>
</dbReference>
<dbReference type="NCBIfam" id="TIGR00184">
    <property type="entry name" value="purA"/>
    <property type="match status" value="1"/>
</dbReference>
<dbReference type="PANTHER" id="PTHR11846">
    <property type="entry name" value="ADENYLOSUCCINATE SYNTHETASE"/>
    <property type="match status" value="1"/>
</dbReference>
<dbReference type="PANTHER" id="PTHR11846:SF0">
    <property type="entry name" value="ADENYLOSUCCINATE SYNTHETASE"/>
    <property type="match status" value="1"/>
</dbReference>
<dbReference type="Pfam" id="PF00709">
    <property type="entry name" value="Adenylsucc_synt"/>
    <property type="match status" value="1"/>
</dbReference>
<dbReference type="SMART" id="SM00788">
    <property type="entry name" value="Adenylsucc_synt"/>
    <property type="match status" value="1"/>
</dbReference>
<dbReference type="SUPFAM" id="SSF52540">
    <property type="entry name" value="P-loop containing nucleoside triphosphate hydrolases"/>
    <property type="match status" value="1"/>
</dbReference>
<dbReference type="PROSITE" id="PS01266">
    <property type="entry name" value="ADENYLOSUCCIN_SYN_1"/>
    <property type="match status" value="1"/>
</dbReference>
<dbReference type="PROSITE" id="PS00513">
    <property type="entry name" value="ADENYLOSUCCIN_SYN_2"/>
    <property type="match status" value="1"/>
</dbReference>
<keyword id="KW-0963">Cytoplasm</keyword>
<keyword id="KW-0342">GTP-binding</keyword>
<keyword id="KW-0436">Ligase</keyword>
<keyword id="KW-0460">Magnesium</keyword>
<keyword id="KW-0479">Metal-binding</keyword>
<keyword id="KW-0547">Nucleotide-binding</keyword>
<keyword id="KW-0658">Purine biosynthesis</keyword>
<keyword id="KW-1185">Reference proteome</keyword>
<reference key="1">
    <citation type="journal article" date="2007" name="J. Bacteriol.">
        <title>The genome sequence of avian pathogenic Escherichia coli strain O1:K1:H7 shares strong similarities with human extraintestinal pathogenic E. coli genomes.</title>
        <authorList>
            <person name="Johnson T.J."/>
            <person name="Kariyawasam S."/>
            <person name="Wannemuehler Y."/>
            <person name="Mangiamele P."/>
            <person name="Johnson S.J."/>
            <person name="Doetkott C."/>
            <person name="Skyberg J.A."/>
            <person name="Lynne A.M."/>
            <person name="Johnson J.R."/>
            <person name="Nolan L.K."/>
        </authorList>
    </citation>
    <scope>NUCLEOTIDE SEQUENCE [LARGE SCALE GENOMIC DNA]</scope>
</reference>